<reference key="1">
    <citation type="submission" date="2006-01" db="EMBL/GenBank/DDBJ databases">
        <title>Complete sequence of Novosphingobium aromaticivorans DSM 12444.</title>
        <authorList>
            <consortium name="US DOE Joint Genome Institute"/>
            <person name="Copeland A."/>
            <person name="Lucas S."/>
            <person name="Lapidus A."/>
            <person name="Barry K."/>
            <person name="Detter J.C."/>
            <person name="Glavina T."/>
            <person name="Hammon N."/>
            <person name="Israni S."/>
            <person name="Pitluck S."/>
            <person name="Chain P."/>
            <person name="Malfatti S."/>
            <person name="Shin M."/>
            <person name="Vergez L."/>
            <person name="Schmutz J."/>
            <person name="Larimer F."/>
            <person name="Land M."/>
            <person name="Kyrpides N."/>
            <person name="Ivanova N."/>
            <person name="Fredrickson J."/>
            <person name="Balkwill D."/>
            <person name="Romine M.F."/>
            <person name="Richardson P."/>
        </authorList>
    </citation>
    <scope>NUCLEOTIDE SEQUENCE [LARGE SCALE GENOMIC DNA]</scope>
    <source>
        <strain>ATCC 700278 / DSM 12444 / CCUG 56034 / CIP 105152 / NBRC 16084 / F199</strain>
    </source>
</reference>
<proteinExistence type="inferred from homology"/>
<organism>
    <name type="scientific">Novosphingobium aromaticivorans (strain ATCC 700278 / DSM 12444 / CCUG 56034 / CIP 105152 / NBRC 16084 / F199)</name>
    <dbReference type="NCBI Taxonomy" id="279238"/>
    <lineage>
        <taxon>Bacteria</taxon>
        <taxon>Pseudomonadati</taxon>
        <taxon>Pseudomonadota</taxon>
        <taxon>Alphaproteobacteria</taxon>
        <taxon>Sphingomonadales</taxon>
        <taxon>Sphingomonadaceae</taxon>
        <taxon>Novosphingobium</taxon>
    </lineage>
</organism>
<sequence>MASQEIEALSGALARLPGLGPRSARRAVLWLIKRRETALPQLLNALTQVQELLVECGVCGNVDTSNPCGICTDHRRDQRSICVVEEVADLWALDRARLFTGKYHVLGGRLSALEGVRPEDLTIGSLLDRVAQGGIDEVVLAMNATLEGQTTAHYIAERLEGAAVRVTQLAHGLPVGGELDYLDEGTLAQALRARRPVG</sequence>
<protein>
    <recommendedName>
        <fullName evidence="1">Recombination protein RecR</fullName>
    </recommendedName>
</protein>
<evidence type="ECO:0000255" key="1">
    <source>
        <dbReference type="HAMAP-Rule" id="MF_00017"/>
    </source>
</evidence>
<comment type="function">
    <text evidence="1">May play a role in DNA repair. It seems to be involved in an RecBC-independent recombinational process of DNA repair. It may act with RecF and RecO.</text>
</comment>
<comment type="similarity">
    <text evidence="1">Belongs to the RecR family.</text>
</comment>
<dbReference type="EMBL" id="CP000248">
    <property type="protein sequence ID" value="ABD27331.1"/>
    <property type="molecule type" value="Genomic_DNA"/>
</dbReference>
<dbReference type="RefSeq" id="WP_011446535.1">
    <property type="nucleotide sequence ID" value="NC_007794.1"/>
</dbReference>
<dbReference type="SMR" id="Q2G492"/>
<dbReference type="STRING" id="279238.Saro_2895"/>
<dbReference type="KEGG" id="nar:Saro_2895"/>
<dbReference type="eggNOG" id="COG0353">
    <property type="taxonomic scope" value="Bacteria"/>
</dbReference>
<dbReference type="HOGENOM" id="CLU_060739_1_1_5"/>
<dbReference type="Proteomes" id="UP000009134">
    <property type="component" value="Chromosome"/>
</dbReference>
<dbReference type="GO" id="GO:0003677">
    <property type="term" value="F:DNA binding"/>
    <property type="evidence" value="ECO:0007669"/>
    <property type="project" value="UniProtKB-UniRule"/>
</dbReference>
<dbReference type="GO" id="GO:0008270">
    <property type="term" value="F:zinc ion binding"/>
    <property type="evidence" value="ECO:0007669"/>
    <property type="project" value="UniProtKB-KW"/>
</dbReference>
<dbReference type="GO" id="GO:0006310">
    <property type="term" value="P:DNA recombination"/>
    <property type="evidence" value="ECO:0007669"/>
    <property type="project" value="UniProtKB-UniRule"/>
</dbReference>
<dbReference type="GO" id="GO:0006281">
    <property type="term" value="P:DNA repair"/>
    <property type="evidence" value="ECO:0007669"/>
    <property type="project" value="UniProtKB-UniRule"/>
</dbReference>
<dbReference type="CDD" id="cd01025">
    <property type="entry name" value="TOPRIM_recR"/>
    <property type="match status" value="1"/>
</dbReference>
<dbReference type="Gene3D" id="3.40.1360.10">
    <property type="match status" value="1"/>
</dbReference>
<dbReference type="Gene3D" id="6.10.250.240">
    <property type="match status" value="1"/>
</dbReference>
<dbReference type="Gene3D" id="1.10.8.420">
    <property type="entry name" value="RecR Domain 1"/>
    <property type="match status" value="1"/>
</dbReference>
<dbReference type="HAMAP" id="MF_00017">
    <property type="entry name" value="RecR"/>
    <property type="match status" value="1"/>
</dbReference>
<dbReference type="InterPro" id="IPR000093">
    <property type="entry name" value="DNA_Rcmb_RecR"/>
</dbReference>
<dbReference type="InterPro" id="IPR023627">
    <property type="entry name" value="Rcmb_RecR"/>
</dbReference>
<dbReference type="InterPro" id="IPR015967">
    <property type="entry name" value="Rcmb_RecR_Znf"/>
</dbReference>
<dbReference type="InterPro" id="IPR006171">
    <property type="entry name" value="TOPRIM_dom"/>
</dbReference>
<dbReference type="InterPro" id="IPR034137">
    <property type="entry name" value="TOPRIM_RecR"/>
</dbReference>
<dbReference type="NCBIfam" id="TIGR00615">
    <property type="entry name" value="recR"/>
    <property type="match status" value="1"/>
</dbReference>
<dbReference type="PANTHER" id="PTHR30446">
    <property type="entry name" value="RECOMBINATION PROTEIN RECR"/>
    <property type="match status" value="1"/>
</dbReference>
<dbReference type="PANTHER" id="PTHR30446:SF0">
    <property type="entry name" value="RECOMBINATION PROTEIN RECR"/>
    <property type="match status" value="1"/>
</dbReference>
<dbReference type="Pfam" id="PF21175">
    <property type="entry name" value="RecR_C"/>
    <property type="match status" value="1"/>
</dbReference>
<dbReference type="Pfam" id="PF21176">
    <property type="entry name" value="RecR_HhH"/>
    <property type="match status" value="1"/>
</dbReference>
<dbReference type="Pfam" id="PF02132">
    <property type="entry name" value="RecR_ZnF"/>
    <property type="match status" value="1"/>
</dbReference>
<dbReference type="Pfam" id="PF13662">
    <property type="entry name" value="Toprim_4"/>
    <property type="match status" value="1"/>
</dbReference>
<dbReference type="SMART" id="SM00493">
    <property type="entry name" value="TOPRIM"/>
    <property type="match status" value="1"/>
</dbReference>
<dbReference type="SUPFAM" id="SSF111304">
    <property type="entry name" value="Recombination protein RecR"/>
    <property type="match status" value="1"/>
</dbReference>
<dbReference type="PROSITE" id="PS01300">
    <property type="entry name" value="RECR"/>
    <property type="match status" value="1"/>
</dbReference>
<dbReference type="PROSITE" id="PS50880">
    <property type="entry name" value="TOPRIM"/>
    <property type="match status" value="1"/>
</dbReference>
<name>RECR_NOVAD</name>
<feature type="chain" id="PRO_0000322925" description="Recombination protein RecR">
    <location>
        <begin position="1"/>
        <end position="198"/>
    </location>
</feature>
<feature type="domain" description="Toprim" evidence="1">
    <location>
        <begin position="79"/>
        <end position="174"/>
    </location>
</feature>
<feature type="zinc finger region" description="C4-type" evidence="1">
    <location>
        <begin position="56"/>
        <end position="71"/>
    </location>
</feature>
<accession>Q2G492</accession>
<gene>
    <name evidence="1" type="primary">recR</name>
    <name type="ordered locus">Saro_2895</name>
</gene>
<keyword id="KW-0227">DNA damage</keyword>
<keyword id="KW-0233">DNA recombination</keyword>
<keyword id="KW-0234">DNA repair</keyword>
<keyword id="KW-0479">Metal-binding</keyword>
<keyword id="KW-1185">Reference proteome</keyword>
<keyword id="KW-0862">Zinc</keyword>
<keyword id="KW-0863">Zinc-finger</keyword>